<evidence type="ECO:0000250" key="1"/>
<evidence type="ECO:0000305" key="2"/>
<reference key="1">
    <citation type="journal article" date="2004" name="Science">
        <title>The Ashbya gossypii genome as a tool for mapping the ancient Saccharomyces cerevisiae genome.</title>
        <authorList>
            <person name="Dietrich F.S."/>
            <person name="Voegeli S."/>
            <person name="Brachat S."/>
            <person name="Lerch A."/>
            <person name="Gates K."/>
            <person name="Steiner S."/>
            <person name="Mohr C."/>
            <person name="Poehlmann R."/>
            <person name="Luedi P."/>
            <person name="Choi S."/>
            <person name="Wing R.A."/>
            <person name="Flavier A."/>
            <person name="Gaffney T.D."/>
            <person name="Philippsen P."/>
        </authorList>
    </citation>
    <scope>NUCLEOTIDE SEQUENCE [LARGE SCALE GENOMIC DNA]</scope>
    <source>
        <strain>ATCC 10895 / CBS 109.51 / FGSC 9923 / NRRL Y-1056</strain>
    </source>
</reference>
<reference key="2">
    <citation type="journal article" date="2013" name="G3 (Bethesda)">
        <title>Genomes of Ashbya fungi isolated from insects reveal four mating-type loci, numerous translocations, lack of transposons, and distinct gene duplications.</title>
        <authorList>
            <person name="Dietrich F.S."/>
            <person name="Voegeli S."/>
            <person name="Kuo S."/>
            <person name="Philippsen P."/>
        </authorList>
    </citation>
    <scope>GENOME REANNOTATION</scope>
    <source>
        <strain>ATCC 10895 / CBS 109.51 / FGSC 9923 / NRRL Y-1056</strain>
    </source>
</reference>
<accession>Q75ET5</accession>
<feature type="chain" id="PRO_0000104653" description="Ribosome biogenesis protein RLP7">
    <location>
        <begin position="1"/>
        <end position="293"/>
    </location>
</feature>
<protein>
    <recommendedName>
        <fullName>Ribosome biogenesis protein RLP7</fullName>
    </recommendedName>
</protein>
<dbReference type="EMBL" id="AE016814">
    <property type="protein sequence ID" value="AAS50355.1"/>
    <property type="molecule type" value="Genomic_DNA"/>
</dbReference>
<dbReference type="RefSeq" id="NP_982531.1">
    <property type="nucleotide sequence ID" value="NM_207884.1"/>
</dbReference>
<dbReference type="SMR" id="Q75ET5"/>
<dbReference type="FunCoup" id="Q75ET5">
    <property type="interactions" value="412"/>
</dbReference>
<dbReference type="STRING" id="284811.Q75ET5"/>
<dbReference type="EnsemblFungi" id="AAS50355">
    <property type="protein sequence ID" value="AAS50355"/>
    <property type="gene ID" value="AGOS_AAL011C"/>
</dbReference>
<dbReference type="GeneID" id="4618620"/>
<dbReference type="KEGG" id="ago:AGOS_AAL011C"/>
<dbReference type="eggNOG" id="KOG3184">
    <property type="taxonomic scope" value="Eukaryota"/>
</dbReference>
<dbReference type="HOGENOM" id="CLU_055156_1_0_1"/>
<dbReference type="InParanoid" id="Q75ET5"/>
<dbReference type="OMA" id="VNGWGPQ"/>
<dbReference type="OrthoDB" id="28644at2759"/>
<dbReference type="Proteomes" id="UP000000591">
    <property type="component" value="Chromosome I"/>
</dbReference>
<dbReference type="GO" id="GO:0022625">
    <property type="term" value="C:cytosolic large ribosomal subunit"/>
    <property type="evidence" value="ECO:0000318"/>
    <property type="project" value="GO_Central"/>
</dbReference>
<dbReference type="GO" id="GO:0005730">
    <property type="term" value="C:nucleolus"/>
    <property type="evidence" value="ECO:0007669"/>
    <property type="project" value="UniProtKB-SubCell"/>
</dbReference>
<dbReference type="GO" id="GO:0003723">
    <property type="term" value="F:RNA binding"/>
    <property type="evidence" value="ECO:0000318"/>
    <property type="project" value="GO_Central"/>
</dbReference>
<dbReference type="GO" id="GO:0003735">
    <property type="term" value="F:structural constituent of ribosome"/>
    <property type="evidence" value="ECO:0000318"/>
    <property type="project" value="GO_Central"/>
</dbReference>
<dbReference type="GO" id="GO:0000463">
    <property type="term" value="P:maturation of LSU-rRNA from tricistronic rRNA transcript (SSU-rRNA, 5.8S rRNA, LSU-rRNA)"/>
    <property type="evidence" value="ECO:0000318"/>
    <property type="project" value="GO_Central"/>
</dbReference>
<dbReference type="CDD" id="cd01657">
    <property type="entry name" value="Ribosomal_L7_archeal_euk"/>
    <property type="match status" value="1"/>
</dbReference>
<dbReference type="FunFam" id="3.30.1390.20:FF:000013">
    <property type="entry name" value="Rlp7p"/>
    <property type="match status" value="1"/>
</dbReference>
<dbReference type="Gene3D" id="3.30.1390.20">
    <property type="entry name" value="Ribosomal protein L30, ferredoxin-like fold domain"/>
    <property type="match status" value="1"/>
</dbReference>
<dbReference type="InterPro" id="IPR036919">
    <property type="entry name" value="Ribo_uL30_ferredoxin-like_sf"/>
</dbReference>
<dbReference type="InterPro" id="IPR039699">
    <property type="entry name" value="Ribosomal_uL30"/>
</dbReference>
<dbReference type="InterPro" id="IPR018038">
    <property type="entry name" value="Ribosomal_uL30_CS"/>
</dbReference>
<dbReference type="InterPro" id="IPR035808">
    <property type="entry name" value="Ribosomal_uL30_euk_arc"/>
</dbReference>
<dbReference type="InterPro" id="IPR016082">
    <property type="entry name" value="Ribosomal_uL30_ferredoxin-like"/>
</dbReference>
<dbReference type="PANTHER" id="PTHR11524">
    <property type="entry name" value="60S RIBOSOMAL PROTEIN L7"/>
    <property type="match status" value="1"/>
</dbReference>
<dbReference type="PANTHER" id="PTHR11524:SF26">
    <property type="entry name" value="RIBOSOME BIOGENESIS PROTEIN RLP7"/>
    <property type="match status" value="1"/>
</dbReference>
<dbReference type="Pfam" id="PF00327">
    <property type="entry name" value="Ribosomal_L30"/>
    <property type="match status" value="1"/>
</dbReference>
<dbReference type="SUPFAM" id="SSF55129">
    <property type="entry name" value="Ribosomal protein L30p/L7e"/>
    <property type="match status" value="1"/>
</dbReference>
<dbReference type="PROSITE" id="PS00634">
    <property type="entry name" value="RIBOSOMAL_L30"/>
    <property type="match status" value="1"/>
</dbReference>
<name>RLP7_EREGS</name>
<organism>
    <name type="scientific">Eremothecium gossypii (strain ATCC 10895 / CBS 109.51 / FGSC 9923 / NRRL Y-1056)</name>
    <name type="common">Yeast</name>
    <name type="synonym">Ashbya gossypii</name>
    <dbReference type="NCBI Taxonomy" id="284811"/>
    <lineage>
        <taxon>Eukaryota</taxon>
        <taxon>Fungi</taxon>
        <taxon>Dikarya</taxon>
        <taxon>Ascomycota</taxon>
        <taxon>Saccharomycotina</taxon>
        <taxon>Saccharomycetes</taxon>
        <taxon>Saccharomycetales</taxon>
        <taxon>Saccharomycetaceae</taxon>
        <taxon>Eremothecium</taxon>
    </lineage>
</organism>
<proteinExistence type="inferred from homology"/>
<gene>
    <name type="primary">RLP7</name>
    <name type="ordered locus">AAL011C</name>
</gene>
<keyword id="KW-0539">Nucleus</keyword>
<keyword id="KW-1185">Reference proteome</keyword>
<keyword id="KW-0690">Ribosome biogenesis</keyword>
<keyword id="KW-0694">RNA-binding</keyword>
<sequence>MATLNSNPEILLRKRRNAERTRVEKQEAARRRAEAEVRQRRARQHKFVRAEALVASTLATEREKTRIQRVSKRAAKQRAGHVTGGEWLVRVRAAADGGLEREKTAYDGRATLLFVVRVRGPAAAKIPRKAHRVLTLLRLAEVNTGVFVRLTAEVFPLLQVVAPYVVVGRPSLASIRALVQKRARVVHQRAGEAAPVEMVLNDNGVVEERLGDEGVICVEDIIHEIATMGEAFAKCNFFLLPFKLGREVSGFSALSRLQKLKQREEASQTRPVSNAAAAPLVEVDVDELIGRLN</sequence>
<comment type="function">
    <text evidence="1">Involved in the biogenesis of the 60S ribosomal subunit. May act as a specificity factor that binds precursor rRNAs and tethers the enzymes that carry out the early 5' to 3' exonucleolytic reactions that generate the mature rRNAs (By similarity).</text>
</comment>
<comment type="subcellular location">
    <subcellularLocation>
        <location evidence="1">Nucleus</location>
        <location evidence="1">Nucleolus</location>
    </subcellularLocation>
</comment>
<comment type="similarity">
    <text evidence="2">Belongs to the universal ribosomal protein uL30 family.</text>
</comment>